<sequence length="391" mass="45223">MVSVRCAECKGKLLCGRSKCPLLEKYRFLKEIKIDSRILDPSPPSIFVGRVGYPKVYAGPLVSINADPVYADSPWLWKSIEEVIRLRTSMLRVSRRFRVEDVREEKKELTEMQEMTAAIKPVDVEAEIRKISRKAEFDDVMQPMGYSAIAESIKLAENPKIPDKVEKVYYDDMKAYEALSYLYNHGFSTYYLQKIFSAGILGERKSRKLVPTRWSITAVHSIVGEAIKREIAAYKPIDKTLLFNYEHFGNHFEVILSPENYFFQLVEIWQRKSFWSPKEDWIGVDSEDIRPKRDYSNLSGGYYAARLPVLEYLREKRGQASVLVIREIKPSYYAPLGVWVVEEGVRKALKSKPEVFESFDDALTAASRRVENKEWRALVSRQTSLASFFGF</sequence>
<protein>
    <recommendedName>
        <fullName evidence="4">DNA repair protein NreA</fullName>
    </recommendedName>
</protein>
<reference key="1">
    <citation type="journal article" date="2016" name="Mol. Microbiol.">
        <title>A novel archaeal DNA repair factor that acts with the UvrABC system to repair mitomycin C-induced DNA damage in a PCNA-dependent manner.</title>
        <authorList>
            <person name="Giroux X."/>
            <person name="MacNeill S.A."/>
        </authorList>
    </citation>
    <scope>NUCLEOTIDE SEQUENCE [GENOMIC DNA]</scope>
    <scope>NOMENCLATURE</scope>
    <scope>PIP MOTIF</scope>
    <scope>POTENTIAL METAL-BINDING SITE</scope>
    <source>
        <strain>ATCC 49558 / DSM 4304 / JCM 9628 / NBRC 100126 / VC-16</strain>
    </source>
</reference>
<reference key="2">
    <citation type="journal article" date="1997" name="Nature">
        <title>The complete genome sequence of the hyperthermophilic, sulphate-reducing archaeon Archaeoglobus fulgidus.</title>
        <authorList>
            <person name="Klenk H.-P."/>
            <person name="Clayton R.A."/>
            <person name="Tomb J.-F."/>
            <person name="White O."/>
            <person name="Nelson K.E."/>
            <person name="Ketchum K.A."/>
            <person name="Dodson R.J."/>
            <person name="Gwinn M.L."/>
            <person name="Hickey E.K."/>
            <person name="Peterson J.D."/>
            <person name="Richardson D.L."/>
            <person name="Kerlavage A.R."/>
            <person name="Graham D.E."/>
            <person name="Kyrpides N.C."/>
            <person name="Fleischmann R.D."/>
            <person name="Quackenbush J."/>
            <person name="Lee N.H."/>
            <person name="Sutton G.G."/>
            <person name="Gill S.R."/>
            <person name="Kirkness E.F."/>
            <person name="Dougherty B.A."/>
            <person name="McKenney K."/>
            <person name="Adams M.D."/>
            <person name="Loftus B.J."/>
            <person name="Peterson S.N."/>
            <person name="Reich C.I."/>
            <person name="McNeil L.K."/>
            <person name="Badger J.H."/>
            <person name="Glodek A."/>
            <person name="Zhou L."/>
            <person name="Overbeek R."/>
            <person name="Gocayne J.D."/>
            <person name="Weidman J.F."/>
            <person name="McDonald L.A."/>
            <person name="Utterback T.R."/>
            <person name="Cotton M.D."/>
            <person name="Spriggs T."/>
            <person name="Artiach P."/>
            <person name="Kaine B.P."/>
            <person name="Sykes S.M."/>
            <person name="Sadow P.W."/>
            <person name="D'Andrea K.P."/>
            <person name="Bowman C."/>
            <person name="Fujii C."/>
            <person name="Garland S.A."/>
            <person name="Mason T.M."/>
            <person name="Olsen G.J."/>
            <person name="Fraser C.M."/>
            <person name="Smith H.O."/>
            <person name="Woese C.R."/>
            <person name="Venter J.C."/>
        </authorList>
    </citation>
    <scope>NUCLEOTIDE SEQUENCE [LARGE SCALE GENOMIC DNA]</scope>
    <source>
        <strain>ATCC 49558 / DSM 4304 / JCM 9628 / NBRC 100126 / VC-16</strain>
    </source>
</reference>
<reference key="3">
    <citation type="journal article" date="2002" name="J. Biol. Chem.">
        <title>Elucidation of an archaeal replication protein network to generate enhanced PCR enzymes.</title>
        <authorList>
            <person name="Motz M."/>
            <person name="Kober I."/>
            <person name="Girardot C."/>
            <person name="Loeser E."/>
            <person name="Bauer U."/>
            <person name="Albers M."/>
            <person name="Moeckel G."/>
            <person name="Minch E."/>
            <person name="Voss H."/>
            <person name="Kilger C."/>
            <person name="Koegl M."/>
        </authorList>
    </citation>
    <scope>INTERACTION WITH PCNA</scope>
</reference>
<proteinExistence type="evidence at protein level"/>
<feature type="chain" id="PRO_0000442519" description="DNA repair protein NreA">
    <location>
        <begin position="1"/>
        <end position="391"/>
    </location>
</feature>
<feature type="zinc finger region" description="C4-type" evidence="1 5">
    <location>
        <begin position="6"/>
        <end position="20"/>
    </location>
</feature>
<feature type="short sequence motif" description="PIP motif" evidence="1 5">
    <location>
        <begin position="382"/>
        <end position="389"/>
    </location>
</feature>
<comment type="function">
    <text evidence="1">Involved in DNA damage repair.</text>
</comment>
<comment type="subunit">
    <text evidence="1 2">Interacts with the DNA polymerase sliding clamp (PCNA) via the PIP (PCNA-interacting peptide) motif.</text>
</comment>
<comment type="domain">
    <text evidence="1 5">Contains a predicted C4 metal binding domain at the N-terminus, which could be a zinc finger DNA binding domain.</text>
</comment>
<comment type="similarity">
    <text evidence="1 5">Belongs to the Nre family.</text>
</comment>
<comment type="sequence caution" evidence="4">
    <conflict type="frameshift">
        <sequence resource="EMBL-CDS" id="AAB89912"/>
    </conflict>
</comment>
<comment type="sequence caution" evidence="4">
    <conflict type="frameshift">
        <sequence resource="EMBL-CDS" id="AAB89916"/>
    </conflict>
</comment>
<dbReference type="EMBL" id="KU605081">
    <property type="protein sequence ID" value="AOA49614.1"/>
    <property type="molecule type" value="Genomic_DNA"/>
</dbReference>
<dbReference type="EMBL" id="AE000782">
    <property type="protein sequence ID" value="AAB89912.1"/>
    <property type="status" value="ALT_FRAME"/>
    <property type="molecule type" value="Genomic_DNA"/>
</dbReference>
<dbReference type="EMBL" id="AE000782">
    <property type="protein sequence ID" value="AAB89916.1"/>
    <property type="status" value="ALT_FRAME"/>
    <property type="molecule type" value="Genomic_DNA"/>
</dbReference>
<dbReference type="PIR" id="A69418">
    <property type="entry name" value="A69418"/>
</dbReference>
<dbReference type="PIR" id="B69418">
    <property type="entry name" value="B69418"/>
</dbReference>
<dbReference type="STRING" id="224325.AF_1346"/>
<dbReference type="PaxDb" id="224325-AF_1346"/>
<dbReference type="EnsemblBacteria" id="AAB89912">
    <property type="protein sequence ID" value="AAB89912"/>
    <property type="gene ID" value="AF_1346"/>
</dbReference>
<dbReference type="EnsemblBacteria" id="AAB89916">
    <property type="protein sequence ID" value="AAB89916"/>
    <property type="gene ID" value="AF_1347"/>
</dbReference>
<dbReference type="KEGG" id="afu:AF_1346"/>
<dbReference type="KEGG" id="afu:AF_1347"/>
<dbReference type="eggNOG" id="arCOG04269">
    <property type="taxonomic scope" value="Archaea"/>
</dbReference>
<dbReference type="HOGENOM" id="CLU_039703_0_0_2"/>
<dbReference type="Proteomes" id="UP000002199">
    <property type="component" value="Chromosome"/>
</dbReference>
<dbReference type="GO" id="GO:0008270">
    <property type="term" value="F:zinc ion binding"/>
    <property type="evidence" value="ECO:0007669"/>
    <property type="project" value="UniProtKB-UniRule"/>
</dbReference>
<dbReference type="GO" id="GO:0006281">
    <property type="term" value="P:DNA repair"/>
    <property type="evidence" value="ECO:0007669"/>
    <property type="project" value="UniProtKB-UniRule"/>
</dbReference>
<dbReference type="HAMAP" id="MF_02096">
    <property type="entry name" value="Nre"/>
    <property type="match status" value="1"/>
</dbReference>
<dbReference type="InterPro" id="IPR033167">
    <property type="entry name" value="Nre"/>
</dbReference>
<dbReference type="InterPro" id="IPR006979">
    <property type="entry name" value="Nre_C"/>
</dbReference>
<dbReference type="InterPro" id="IPR006978">
    <property type="entry name" value="Nre_N"/>
</dbReference>
<dbReference type="PANTHER" id="PTHR38136">
    <property type="entry name" value="DNA REPAIR PROTEIN"/>
    <property type="match status" value="1"/>
</dbReference>
<dbReference type="PANTHER" id="PTHR38136:SF2">
    <property type="entry name" value="DNA REPAIR PROTEIN"/>
    <property type="match status" value="1"/>
</dbReference>
<dbReference type="Pfam" id="PF04895">
    <property type="entry name" value="Nre_C"/>
    <property type="match status" value="1"/>
</dbReference>
<dbReference type="Pfam" id="PF04894">
    <property type="entry name" value="Nre_N"/>
    <property type="match status" value="1"/>
</dbReference>
<gene>
    <name evidence="3" type="primary">nreA</name>
    <name evidence="6 7" type="ordered locus">AF_1346/AF_1347</name>
</gene>
<keyword id="KW-0227">DNA damage</keyword>
<keyword id="KW-0234">DNA repair</keyword>
<keyword id="KW-0479">Metal-binding</keyword>
<keyword id="KW-1185">Reference proteome</keyword>
<keyword id="KW-0862">Zinc</keyword>
<keyword id="KW-0863">Zinc-finger</keyword>
<name>NREA_ARCFU</name>
<organism>
    <name type="scientific">Archaeoglobus fulgidus (strain ATCC 49558 / DSM 4304 / JCM 9628 / NBRC 100126 / VC-16)</name>
    <dbReference type="NCBI Taxonomy" id="224325"/>
    <lineage>
        <taxon>Archaea</taxon>
        <taxon>Methanobacteriati</taxon>
        <taxon>Methanobacteriota</taxon>
        <taxon>Archaeoglobi</taxon>
        <taxon>Archaeoglobales</taxon>
        <taxon>Archaeoglobaceae</taxon>
        <taxon>Archaeoglobus</taxon>
    </lineage>
</organism>
<evidence type="ECO:0000255" key="1">
    <source>
        <dbReference type="HAMAP-Rule" id="MF_02096"/>
    </source>
</evidence>
<evidence type="ECO:0000269" key="2">
    <source>
    </source>
</evidence>
<evidence type="ECO:0000303" key="3">
    <source>
    </source>
</evidence>
<evidence type="ECO:0000305" key="4"/>
<evidence type="ECO:0000305" key="5">
    <source>
    </source>
</evidence>
<evidence type="ECO:0000312" key="6">
    <source>
        <dbReference type="EMBL" id="AAB89912.1"/>
    </source>
</evidence>
<evidence type="ECO:0000312" key="7">
    <source>
        <dbReference type="EMBL" id="AAB89916.1"/>
    </source>
</evidence>
<accession>A0A1B2LS07</accession>
<accession>O28922</accession>
<accession>O28923</accession>